<name>DUT_BURMS</name>
<organism>
    <name type="scientific">Burkholderia mallei (strain SAVP1)</name>
    <dbReference type="NCBI Taxonomy" id="320388"/>
    <lineage>
        <taxon>Bacteria</taxon>
        <taxon>Pseudomonadati</taxon>
        <taxon>Pseudomonadota</taxon>
        <taxon>Betaproteobacteria</taxon>
        <taxon>Burkholderiales</taxon>
        <taxon>Burkholderiaceae</taxon>
        <taxon>Burkholderia</taxon>
        <taxon>pseudomallei group</taxon>
    </lineage>
</organism>
<dbReference type="EC" id="3.6.1.23" evidence="1"/>
<dbReference type="EMBL" id="CP000526">
    <property type="protein sequence ID" value="ABM49645.1"/>
    <property type="molecule type" value="Genomic_DNA"/>
</dbReference>
<dbReference type="RefSeq" id="WP_004186718.1">
    <property type="nucleotide sequence ID" value="NC_008785.1"/>
</dbReference>
<dbReference type="SMR" id="A1V6V5"/>
<dbReference type="GeneID" id="93059416"/>
<dbReference type="KEGG" id="bmv:BMASAVP1_A2661"/>
<dbReference type="HOGENOM" id="CLU_068508_1_1_4"/>
<dbReference type="UniPathway" id="UPA00610">
    <property type="reaction ID" value="UER00666"/>
</dbReference>
<dbReference type="GO" id="GO:0004170">
    <property type="term" value="F:dUTP diphosphatase activity"/>
    <property type="evidence" value="ECO:0007669"/>
    <property type="project" value="UniProtKB-UniRule"/>
</dbReference>
<dbReference type="GO" id="GO:0000287">
    <property type="term" value="F:magnesium ion binding"/>
    <property type="evidence" value="ECO:0007669"/>
    <property type="project" value="UniProtKB-UniRule"/>
</dbReference>
<dbReference type="GO" id="GO:0006226">
    <property type="term" value="P:dUMP biosynthetic process"/>
    <property type="evidence" value="ECO:0007669"/>
    <property type="project" value="UniProtKB-UniRule"/>
</dbReference>
<dbReference type="GO" id="GO:0046081">
    <property type="term" value="P:dUTP catabolic process"/>
    <property type="evidence" value="ECO:0007669"/>
    <property type="project" value="InterPro"/>
</dbReference>
<dbReference type="CDD" id="cd07557">
    <property type="entry name" value="trimeric_dUTPase"/>
    <property type="match status" value="1"/>
</dbReference>
<dbReference type="FunFam" id="2.70.40.10:FF:000002">
    <property type="entry name" value="dUTP diphosphatase"/>
    <property type="match status" value="1"/>
</dbReference>
<dbReference type="Gene3D" id="2.70.40.10">
    <property type="match status" value="1"/>
</dbReference>
<dbReference type="HAMAP" id="MF_00116">
    <property type="entry name" value="dUTPase_bact"/>
    <property type="match status" value="1"/>
</dbReference>
<dbReference type="InterPro" id="IPR008181">
    <property type="entry name" value="dUTPase"/>
</dbReference>
<dbReference type="InterPro" id="IPR029054">
    <property type="entry name" value="dUTPase-like"/>
</dbReference>
<dbReference type="InterPro" id="IPR036157">
    <property type="entry name" value="dUTPase-like_sf"/>
</dbReference>
<dbReference type="InterPro" id="IPR033704">
    <property type="entry name" value="dUTPase_trimeric"/>
</dbReference>
<dbReference type="NCBIfam" id="TIGR00576">
    <property type="entry name" value="dut"/>
    <property type="match status" value="1"/>
</dbReference>
<dbReference type="NCBIfam" id="NF001862">
    <property type="entry name" value="PRK00601.1"/>
    <property type="match status" value="1"/>
</dbReference>
<dbReference type="PANTHER" id="PTHR11241">
    <property type="entry name" value="DEOXYURIDINE 5'-TRIPHOSPHATE NUCLEOTIDOHYDROLASE"/>
    <property type="match status" value="1"/>
</dbReference>
<dbReference type="PANTHER" id="PTHR11241:SF0">
    <property type="entry name" value="DEOXYURIDINE 5'-TRIPHOSPHATE NUCLEOTIDOHYDROLASE"/>
    <property type="match status" value="1"/>
</dbReference>
<dbReference type="Pfam" id="PF00692">
    <property type="entry name" value="dUTPase"/>
    <property type="match status" value="1"/>
</dbReference>
<dbReference type="SUPFAM" id="SSF51283">
    <property type="entry name" value="dUTPase-like"/>
    <property type="match status" value="1"/>
</dbReference>
<gene>
    <name evidence="1" type="primary">dut</name>
    <name type="ordered locus">BMASAVP1_A2661</name>
</gene>
<feature type="chain" id="PRO_1000015454" description="Deoxyuridine 5'-triphosphate nucleotidohydrolase">
    <location>
        <begin position="1"/>
        <end position="148"/>
    </location>
</feature>
<feature type="binding site" evidence="1">
    <location>
        <begin position="67"/>
        <end position="69"/>
    </location>
    <ligand>
        <name>substrate</name>
    </ligand>
</feature>
<feature type="binding site" evidence="1">
    <location>
        <position position="80"/>
    </location>
    <ligand>
        <name>substrate</name>
    </ligand>
</feature>
<feature type="binding site" evidence="1">
    <location>
        <begin position="84"/>
        <end position="86"/>
    </location>
    <ligand>
        <name>substrate</name>
    </ligand>
</feature>
<feature type="binding site" evidence="1">
    <location>
        <position position="94"/>
    </location>
    <ligand>
        <name>substrate</name>
    </ligand>
</feature>
<protein>
    <recommendedName>
        <fullName evidence="1">Deoxyuridine 5'-triphosphate nucleotidohydrolase</fullName>
        <shortName evidence="1">dUTPase</shortName>
        <ecNumber evidence="1">3.6.1.23</ecNumber>
    </recommendedName>
    <alternativeName>
        <fullName evidence="1">dUTP pyrophosphatase</fullName>
    </alternativeName>
</protein>
<evidence type="ECO:0000255" key="1">
    <source>
        <dbReference type="HAMAP-Rule" id="MF_00116"/>
    </source>
</evidence>
<comment type="function">
    <text evidence="1">This enzyme is involved in nucleotide metabolism: it produces dUMP, the immediate precursor of thymidine nucleotides and it decreases the intracellular concentration of dUTP so that uracil cannot be incorporated into DNA.</text>
</comment>
<comment type="catalytic activity">
    <reaction evidence="1">
        <text>dUTP + H2O = dUMP + diphosphate + H(+)</text>
        <dbReference type="Rhea" id="RHEA:10248"/>
        <dbReference type="ChEBI" id="CHEBI:15377"/>
        <dbReference type="ChEBI" id="CHEBI:15378"/>
        <dbReference type="ChEBI" id="CHEBI:33019"/>
        <dbReference type="ChEBI" id="CHEBI:61555"/>
        <dbReference type="ChEBI" id="CHEBI:246422"/>
        <dbReference type="EC" id="3.6.1.23"/>
    </reaction>
</comment>
<comment type="cofactor">
    <cofactor evidence="1">
        <name>Mg(2+)</name>
        <dbReference type="ChEBI" id="CHEBI:18420"/>
    </cofactor>
</comment>
<comment type="pathway">
    <text evidence="1">Pyrimidine metabolism; dUMP biosynthesis; dUMP from dCTP (dUTP route): step 2/2.</text>
</comment>
<comment type="similarity">
    <text evidence="1">Belongs to the dUTPase family.</text>
</comment>
<proteinExistence type="inferred from homology"/>
<accession>A1V6V5</accession>
<keyword id="KW-0378">Hydrolase</keyword>
<keyword id="KW-0460">Magnesium</keyword>
<keyword id="KW-0479">Metal-binding</keyword>
<keyword id="KW-0546">Nucleotide metabolism</keyword>
<sequence>MKLDLKILDARMRDYLPKYATTGSAGLDLRACLDAPVTLKPGDTALVPTGLAIHLADPGYAALILPRSGLGHKHGIVLGNLVGLIDSDYQGELMISTWNRGQTEFALNPFERLAQLVIVPVVQARFNLVDDFAQSERGAGGFGSTGRG</sequence>
<reference key="1">
    <citation type="journal article" date="2010" name="Genome Biol. Evol.">
        <title>Continuing evolution of Burkholderia mallei through genome reduction and large-scale rearrangements.</title>
        <authorList>
            <person name="Losada L."/>
            <person name="Ronning C.M."/>
            <person name="DeShazer D."/>
            <person name="Woods D."/>
            <person name="Fedorova N."/>
            <person name="Kim H.S."/>
            <person name="Shabalina S.A."/>
            <person name="Pearson T.R."/>
            <person name="Brinkac L."/>
            <person name="Tan P."/>
            <person name="Nandi T."/>
            <person name="Crabtree J."/>
            <person name="Badger J."/>
            <person name="Beckstrom-Sternberg S."/>
            <person name="Saqib M."/>
            <person name="Schutzer S.E."/>
            <person name="Keim P."/>
            <person name="Nierman W.C."/>
        </authorList>
    </citation>
    <scope>NUCLEOTIDE SEQUENCE [LARGE SCALE GENOMIC DNA]</scope>
    <source>
        <strain>SAVP1</strain>
    </source>
</reference>